<protein>
    <recommendedName>
        <fullName evidence="1">Ribosome-recycling factor</fullName>
        <shortName evidence="1">RRF</shortName>
    </recommendedName>
    <alternativeName>
        <fullName evidence="1">Ribosome-releasing factor</fullName>
    </alternativeName>
</protein>
<feature type="chain" id="PRO_1000003240" description="Ribosome-recycling factor">
    <location>
        <begin position="1"/>
        <end position="186"/>
    </location>
</feature>
<organism>
    <name type="scientific">Cupriavidus necator (strain ATCC 17699 / DSM 428 / KCTC 22496 / NCIMB 10442 / H16 / Stanier 337)</name>
    <name type="common">Ralstonia eutropha</name>
    <dbReference type="NCBI Taxonomy" id="381666"/>
    <lineage>
        <taxon>Bacteria</taxon>
        <taxon>Pseudomonadati</taxon>
        <taxon>Pseudomonadota</taxon>
        <taxon>Betaproteobacteria</taxon>
        <taxon>Burkholderiales</taxon>
        <taxon>Burkholderiaceae</taxon>
        <taxon>Cupriavidus</taxon>
    </lineage>
</organism>
<dbReference type="EMBL" id="AM260479">
    <property type="protein sequence ID" value="CAJ93152.1"/>
    <property type="molecule type" value="Genomic_DNA"/>
</dbReference>
<dbReference type="RefSeq" id="WP_010809598.1">
    <property type="nucleotide sequence ID" value="NZ_CP039287.1"/>
</dbReference>
<dbReference type="SMR" id="Q0KA19"/>
<dbReference type="STRING" id="381666.H16_A2052"/>
<dbReference type="KEGG" id="reh:H16_A2052"/>
<dbReference type="eggNOG" id="COG0233">
    <property type="taxonomic scope" value="Bacteria"/>
</dbReference>
<dbReference type="HOGENOM" id="CLU_073981_2_0_4"/>
<dbReference type="OrthoDB" id="9804006at2"/>
<dbReference type="Proteomes" id="UP000008210">
    <property type="component" value="Chromosome 1"/>
</dbReference>
<dbReference type="GO" id="GO:0005829">
    <property type="term" value="C:cytosol"/>
    <property type="evidence" value="ECO:0007669"/>
    <property type="project" value="GOC"/>
</dbReference>
<dbReference type="GO" id="GO:0043023">
    <property type="term" value="F:ribosomal large subunit binding"/>
    <property type="evidence" value="ECO:0007669"/>
    <property type="project" value="TreeGrafter"/>
</dbReference>
<dbReference type="GO" id="GO:0002184">
    <property type="term" value="P:cytoplasmic translational termination"/>
    <property type="evidence" value="ECO:0007669"/>
    <property type="project" value="TreeGrafter"/>
</dbReference>
<dbReference type="CDD" id="cd00520">
    <property type="entry name" value="RRF"/>
    <property type="match status" value="1"/>
</dbReference>
<dbReference type="FunFam" id="1.10.132.20:FF:000001">
    <property type="entry name" value="Ribosome-recycling factor"/>
    <property type="match status" value="1"/>
</dbReference>
<dbReference type="FunFam" id="3.30.1360.40:FF:000001">
    <property type="entry name" value="Ribosome-recycling factor"/>
    <property type="match status" value="1"/>
</dbReference>
<dbReference type="Gene3D" id="3.30.1360.40">
    <property type="match status" value="1"/>
</dbReference>
<dbReference type="Gene3D" id="1.10.132.20">
    <property type="entry name" value="Ribosome-recycling factor"/>
    <property type="match status" value="1"/>
</dbReference>
<dbReference type="HAMAP" id="MF_00040">
    <property type="entry name" value="RRF"/>
    <property type="match status" value="1"/>
</dbReference>
<dbReference type="InterPro" id="IPR002661">
    <property type="entry name" value="Ribosome_recyc_fac"/>
</dbReference>
<dbReference type="InterPro" id="IPR023584">
    <property type="entry name" value="Ribosome_recyc_fac_dom"/>
</dbReference>
<dbReference type="InterPro" id="IPR036191">
    <property type="entry name" value="RRF_sf"/>
</dbReference>
<dbReference type="NCBIfam" id="TIGR00496">
    <property type="entry name" value="frr"/>
    <property type="match status" value="1"/>
</dbReference>
<dbReference type="PANTHER" id="PTHR20982:SF3">
    <property type="entry name" value="MITOCHONDRIAL RIBOSOME RECYCLING FACTOR PSEUDO 1"/>
    <property type="match status" value="1"/>
</dbReference>
<dbReference type="PANTHER" id="PTHR20982">
    <property type="entry name" value="RIBOSOME RECYCLING FACTOR"/>
    <property type="match status" value="1"/>
</dbReference>
<dbReference type="Pfam" id="PF01765">
    <property type="entry name" value="RRF"/>
    <property type="match status" value="1"/>
</dbReference>
<dbReference type="SUPFAM" id="SSF55194">
    <property type="entry name" value="Ribosome recycling factor, RRF"/>
    <property type="match status" value="1"/>
</dbReference>
<reference key="1">
    <citation type="journal article" date="2006" name="Nat. Biotechnol.">
        <title>Genome sequence of the bioplastic-producing 'Knallgas' bacterium Ralstonia eutropha H16.</title>
        <authorList>
            <person name="Pohlmann A."/>
            <person name="Fricke W.F."/>
            <person name="Reinecke F."/>
            <person name="Kusian B."/>
            <person name="Liesegang H."/>
            <person name="Cramm R."/>
            <person name="Eitinger T."/>
            <person name="Ewering C."/>
            <person name="Poetter M."/>
            <person name="Schwartz E."/>
            <person name="Strittmatter A."/>
            <person name="Voss I."/>
            <person name="Gottschalk G."/>
            <person name="Steinbuechel A."/>
            <person name="Friedrich B."/>
            <person name="Bowien B."/>
        </authorList>
    </citation>
    <scope>NUCLEOTIDE SEQUENCE [LARGE SCALE GENOMIC DNA]</scope>
    <source>
        <strain>ATCC 17699 / DSM 428 / KCTC 22496 / NCIMB 10442 / H16 / Stanier 337</strain>
    </source>
</reference>
<evidence type="ECO:0000255" key="1">
    <source>
        <dbReference type="HAMAP-Rule" id="MF_00040"/>
    </source>
</evidence>
<proteinExistence type="inferred from homology"/>
<keyword id="KW-0963">Cytoplasm</keyword>
<keyword id="KW-0648">Protein biosynthesis</keyword>
<keyword id="KW-1185">Reference proteome</keyword>
<comment type="function">
    <text evidence="1">Responsible for the release of ribosomes from messenger RNA at the termination of protein biosynthesis. May increase the efficiency of translation by recycling ribosomes from one round of translation to another.</text>
</comment>
<comment type="subcellular location">
    <subcellularLocation>
        <location evidence="1">Cytoplasm</location>
    </subcellularLocation>
</comment>
<comment type="similarity">
    <text evidence="1">Belongs to the RRF family.</text>
</comment>
<sequence length="186" mass="20798">MSVADTKKSVEQKMQKSIEAFKADLAKIRTGRAHTGLLDHVQVDYYGSMVPISQVAAVGLADARTITVQPWEKKMVGAVEKAIRDCDLGLNPATMGEVIRVPMPALTEERRKELTKVVKGEAEGAKVAVRNLRRDANEQFKKLVKDKTISEDDERRGQDEVQKLTDKYVAEIDKMVAEKEKEIMTV</sequence>
<name>RRF_CUPNH</name>
<accession>Q0KA19</accession>
<gene>
    <name evidence="1" type="primary">frr</name>
    <name type="ordered locus">H16_A2052</name>
</gene>